<name>PTCD1_HUMAN</name>
<dbReference type="EMBL" id="AB014532">
    <property type="protein sequence ID" value="BAA31607.1"/>
    <property type="status" value="ALT_INIT"/>
    <property type="molecule type" value="mRNA"/>
</dbReference>
<dbReference type="EMBL" id="AC004922">
    <property type="status" value="NOT_ANNOTATED_CDS"/>
    <property type="molecule type" value="Genomic_DNA"/>
</dbReference>
<dbReference type="EMBL" id="AC073063">
    <property type="status" value="NOT_ANNOTATED_CDS"/>
    <property type="molecule type" value="Genomic_DNA"/>
</dbReference>
<dbReference type="EMBL" id="AC090113">
    <property type="status" value="NOT_ANNOTATED_CDS"/>
    <property type="molecule type" value="Genomic_DNA"/>
</dbReference>
<dbReference type="EMBL" id="BC003688">
    <property type="protein sequence ID" value="AAH03688.2"/>
    <property type="molecule type" value="mRNA"/>
</dbReference>
<dbReference type="EMBL" id="BC080580">
    <property type="protein sequence ID" value="AAH80580.1"/>
    <property type="molecule type" value="mRNA"/>
</dbReference>
<dbReference type="EMBL" id="BC103502">
    <property type="protein sequence ID" value="AAI03503.1"/>
    <property type="molecule type" value="mRNA"/>
</dbReference>
<dbReference type="CCDS" id="CCDS34691.1"/>
<dbReference type="PIR" id="T00383">
    <property type="entry name" value="T00383"/>
</dbReference>
<dbReference type="RefSeq" id="NP_056360.2">
    <property type="nucleotide sequence ID" value="NM_015545.3"/>
</dbReference>
<dbReference type="SMR" id="O75127"/>
<dbReference type="BioGRID" id="117493">
    <property type="interactions" value="162"/>
</dbReference>
<dbReference type="DIP" id="DIP-56845N"/>
<dbReference type="FunCoup" id="O75127">
    <property type="interactions" value="2022"/>
</dbReference>
<dbReference type="IntAct" id="O75127">
    <property type="interactions" value="120"/>
</dbReference>
<dbReference type="MINT" id="O75127"/>
<dbReference type="STRING" id="9606.ENSP00000292478"/>
<dbReference type="iPTMnet" id="O75127"/>
<dbReference type="PhosphoSitePlus" id="O75127"/>
<dbReference type="SwissPalm" id="O75127"/>
<dbReference type="BioMuta" id="PTCD1"/>
<dbReference type="jPOST" id="O75127"/>
<dbReference type="MassIVE" id="O75127"/>
<dbReference type="PaxDb" id="9606-ENSP00000292478"/>
<dbReference type="PeptideAtlas" id="O75127"/>
<dbReference type="ProteomicsDB" id="49780"/>
<dbReference type="Pumba" id="O75127"/>
<dbReference type="Antibodypedia" id="16154">
    <property type="antibodies" value="30 antibodies from 12 providers"/>
</dbReference>
<dbReference type="DNASU" id="26024"/>
<dbReference type="Ensembl" id="ENST00000292478.9">
    <property type="protein sequence ID" value="ENSP00000292478.5"/>
    <property type="gene ID" value="ENSG00000106246.18"/>
</dbReference>
<dbReference type="GeneID" id="26024"/>
<dbReference type="KEGG" id="hsa:26024"/>
<dbReference type="MANE-Select" id="ENST00000292478.9">
    <property type="protein sequence ID" value="ENSP00000292478.5"/>
    <property type="RefSeq nucleotide sequence ID" value="NM_015545.4"/>
    <property type="RefSeq protein sequence ID" value="NP_056360.2"/>
</dbReference>
<dbReference type="UCSC" id="uc003uqh.4">
    <property type="organism name" value="human"/>
</dbReference>
<dbReference type="AGR" id="HGNC:22198"/>
<dbReference type="CTD" id="26024"/>
<dbReference type="DisGeNET" id="26024"/>
<dbReference type="GeneCards" id="PTCD1"/>
<dbReference type="HGNC" id="HGNC:22198">
    <property type="gene designation" value="PTCD1"/>
</dbReference>
<dbReference type="HPA" id="ENSG00000106246">
    <property type="expression patterns" value="Low tissue specificity"/>
</dbReference>
<dbReference type="MalaCards" id="PTCD1"/>
<dbReference type="MIM" id="614774">
    <property type="type" value="gene"/>
</dbReference>
<dbReference type="neXtProt" id="NX_O75127"/>
<dbReference type="OpenTargets" id="ENSG00000106246"/>
<dbReference type="PharmGKB" id="PA134877986"/>
<dbReference type="VEuPathDB" id="HostDB:ENSG00000106246"/>
<dbReference type="eggNOG" id="KOG4197">
    <property type="taxonomic scope" value="Eukaryota"/>
</dbReference>
<dbReference type="GeneTree" id="ENSGT00940000153974"/>
<dbReference type="HOGENOM" id="CLU_021952_0_0_1"/>
<dbReference type="InParanoid" id="O75127"/>
<dbReference type="PAN-GO" id="O75127">
    <property type="GO annotations" value="3 GO annotations based on evolutionary models"/>
</dbReference>
<dbReference type="PhylomeDB" id="O75127"/>
<dbReference type="PathwayCommons" id="O75127"/>
<dbReference type="SignaLink" id="O75127"/>
<dbReference type="BioGRID-ORCS" id="26024">
    <property type="hits" value="234 hits in 723 CRISPR screens"/>
</dbReference>
<dbReference type="CD-CODE" id="5965E019">
    <property type="entry name" value="mtRNA granule"/>
</dbReference>
<dbReference type="GenomeRNAi" id="26024"/>
<dbReference type="Pharos" id="O75127">
    <property type="development level" value="Tdark"/>
</dbReference>
<dbReference type="PRO" id="PR:O75127"/>
<dbReference type="Proteomes" id="UP000005640">
    <property type="component" value="Chromosome 7"/>
</dbReference>
<dbReference type="RNAct" id="O75127">
    <property type="molecule type" value="protein"/>
</dbReference>
<dbReference type="Bgee" id="ENSG00000106246">
    <property type="expression patterns" value="Expressed in buccal mucosa cell and 206 other cell types or tissues"/>
</dbReference>
<dbReference type="ExpressionAtlas" id="O75127">
    <property type="expression patterns" value="baseline and differential"/>
</dbReference>
<dbReference type="GO" id="GO:0005759">
    <property type="term" value="C:mitochondrial matrix"/>
    <property type="evidence" value="ECO:0000250"/>
    <property type="project" value="UniProtKB"/>
</dbReference>
<dbReference type="GO" id="GO:0005739">
    <property type="term" value="C:mitochondrion"/>
    <property type="evidence" value="ECO:0000314"/>
    <property type="project" value="UniProtKB"/>
</dbReference>
<dbReference type="GO" id="GO:0003723">
    <property type="term" value="F:RNA binding"/>
    <property type="evidence" value="ECO:0007005"/>
    <property type="project" value="UniProtKB"/>
</dbReference>
<dbReference type="GO" id="GO:0000049">
    <property type="term" value="F:tRNA binding"/>
    <property type="evidence" value="ECO:0000314"/>
    <property type="project" value="UniProtKB"/>
</dbReference>
<dbReference type="GO" id="GO:0032543">
    <property type="term" value="P:mitochondrial translation"/>
    <property type="evidence" value="ECO:0007669"/>
    <property type="project" value="Ensembl"/>
</dbReference>
<dbReference type="GO" id="GO:0042780">
    <property type="term" value="P:tRNA 3'-end processing"/>
    <property type="evidence" value="ECO:0000314"/>
    <property type="project" value="UniProtKB"/>
</dbReference>
<dbReference type="FunFam" id="1.25.40.10:FF:000408">
    <property type="entry name" value="Pentatricopeptide repeat domain 1"/>
    <property type="match status" value="1"/>
</dbReference>
<dbReference type="FunFam" id="1.25.40.10:FF:000255">
    <property type="entry name" value="Pentatricopeptide repeat-containing protein 1, mitochondrial"/>
    <property type="match status" value="1"/>
</dbReference>
<dbReference type="FunFam" id="1.25.40.10:FF:000321">
    <property type="entry name" value="pentatricopeptide repeat-containing protein 1, mitochondrial isoform X1"/>
    <property type="match status" value="1"/>
</dbReference>
<dbReference type="Gene3D" id="1.25.40.10">
    <property type="entry name" value="Tetratricopeptide repeat domain"/>
    <property type="match status" value="3"/>
</dbReference>
<dbReference type="InterPro" id="IPR002885">
    <property type="entry name" value="Pentatricopeptide_rpt"/>
</dbReference>
<dbReference type="InterPro" id="IPR033443">
    <property type="entry name" value="PROP1-like_PPR_dom"/>
</dbReference>
<dbReference type="InterPro" id="IPR011990">
    <property type="entry name" value="TPR-like_helical_dom_sf"/>
</dbReference>
<dbReference type="NCBIfam" id="TIGR00756">
    <property type="entry name" value="PPR"/>
    <property type="match status" value="1"/>
</dbReference>
<dbReference type="PANTHER" id="PTHR24014">
    <property type="entry name" value="2-OXOGLUTARATE AND IRON-DEPENDENT OXYGENASE DOMAIN-CONTAINING PROTEIN 2"/>
    <property type="match status" value="1"/>
</dbReference>
<dbReference type="PANTHER" id="PTHR24014:SF6">
    <property type="entry name" value="PENTATRICOPEPTIDE REPEAT-CONTAINING PROTEIN 1, MITOCHONDRIAL"/>
    <property type="match status" value="1"/>
</dbReference>
<dbReference type="Pfam" id="PF13812">
    <property type="entry name" value="PPR_3"/>
    <property type="match status" value="1"/>
</dbReference>
<dbReference type="Pfam" id="PF17177">
    <property type="entry name" value="PPR_long"/>
    <property type="match status" value="1"/>
</dbReference>
<dbReference type="PROSITE" id="PS51375">
    <property type="entry name" value="PPR"/>
    <property type="match status" value="7"/>
</dbReference>
<comment type="function">
    <text evidence="4">Mitochondrial protein implicated in negative regulation of leucine tRNA levels, as well as negative regulation of mitochondria-encoded proteins and COX activity. Also affects the 3'-processing of mitochondrial tRNAs.</text>
</comment>
<comment type="subunit">
    <text evidence="3 4">Associates with mitochondrial leucine tRNAs. Interacts with ELAC2.</text>
</comment>
<comment type="interaction">
    <interactant intactId="EBI-2560233">
        <id>O75127</id>
    </interactant>
    <interactant intactId="EBI-3866279">
        <id>Q9BWT7</id>
        <label>CARD10</label>
    </interactant>
    <organismsDiffer>false</organismsDiffer>
    <experiments>3</experiments>
</comment>
<comment type="interaction">
    <interactant intactId="EBI-2560233">
        <id>O75127</id>
    </interactant>
    <interactant intactId="EBI-349854">
        <id>P13569</id>
        <label>CFTR</label>
    </interactant>
    <organismsDiffer>false</organismsDiffer>
    <experiments>3</experiments>
</comment>
<comment type="interaction">
    <interactant intactId="EBI-2560233">
        <id>O75127</id>
    </interactant>
    <interactant intactId="EBI-3918971">
        <id>Q9Y680</id>
        <label>FKBP7</label>
    </interactant>
    <organismsDiffer>false</organismsDiffer>
    <experiments>3</experiments>
</comment>
<comment type="interaction">
    <interactant intactId="EBI-2560233">
        <id>O75127</id>
    </interactant>
    <interactant intactId="EBI-356700">
        <id>P57678</id>
        <label>GEMIN4</label>
    </interactant>
    <organismsDiffer>false</organismsDiffer>
    <experiments>3</experiments>
</comment>
<comment type="interaction">
    <interactant intactId="EBI-2560233">
        <id>O75127</id>
    </interactant>
    <interactant intactId="EBI-11522433">
        <id>Q5JR59-3</id>
        <label>MTUS2</label>
    </interactant>
    <organismsDiffer>false</organismsDiffer>
    <experiments>3</experiments>
</comment>
<comment type="interaction">
    <interactant intactId="EBI-2560233">
        <id>O75127</id>
    </interactant>
    <interactant intactId="EBI-10271199">
        <id>Q8NI38</id>
        <label>NFKBID</label>
    </interactant>
    <organismsDiffer>false</organismsDiffer>
    <experiments>3</experiments>
</comment>
<comment type="interaction">
    <interactant intactId="EBI-2560233">
        <id>O75127</id>
    </interactant>
    <interactant intactId="EBI-9071725">
        <id>P08247</id>
        <label>SYP</label>
    </interactant>
    <organismsDiffer>false</organismsDiffer>
    <experiments>3</experiments>
</comment>
<comment type="interaction">
    <interactant intactId="EBI-2560233">
        <id>O75127</id>
    </interactant>
    <interactant intactId="EBI-1105213">
        <id>Q9UBB9</id>
        <label>TFIP11</label>
    </interactant>
    <organismsDiffer>false</organismsDiffer>
    <experiments>3</experiments>
</comment>
<comment type="subcellular location">
    <subcellularLocation>
        <location evidence="3 4">Mitochondrion</location>
    </subcellularLocation>
    <subcellularLocation>
        <location evidence="1">Mitochondrion matrix</location>
    </subcellularLocation>
</comment>
<comment type="tissue specificity">
    <text evidence="3">Abundant in testes, skeletal muscle and heart.</text>
</comment>
<comment type="similarity">
    <text evidence="5">Belongs to the PTCD1 family.</text>
</comment>
<comment type="sequence caution" evidence="5">
    <conflict type="erroneous initiation">
        <sequence resource="EMBL-CDS" id="BAA31607"/>
    </conflict>
    <text>Extended N-terminus.</text>
</comment>
<keyword id="KW-0496">Mitochondrion</keyword>
<keyword id="KW-1267">Proteomics identification</keyword>
<keyword id="KW-1185">Reference proteome</keyword>
<keyword id="KW-0677">Repeat</keyword>
<keyword id="KW-0819">tRNA processing</keyword>
<reference key="1">
    <citation type="journal article" date="1998" name="DNA Res.">
        <title>Prediction of the coding sequences of unidentified human genes. X. The complete sequences of 100 new cDNA clones from brain which can code for large proteins in vitro.</title>
        <authorList>
            <person name="Ishikawa K."/>
            <person name="Nagase T."/>
            <person name="Suyama M."/>
            <person name="Miyajima N."/>
            <person name="Tanaka A."/>
            <person name="Kotani H."/>
            <person name="Nomura N."/>
            <person name="Ohara O."/>
        </authorList>
    </citation>
    <scope>NUCLEOTIDE SEQUENCE [LARGE SCALE MRNA]</scope>
    <source>
        <tissue>Brain</tissue>
    </source>
</reference>
<reference key="2">
    <citation type="journal article" date="2003" name="Nature">
        <title>The DNA sequence of human chromosome 7.</title>
        <authorList>
            <person name="Hillier L.W."/>
            <person name="Fulton R.S."/>
            <person name="Fulton L.A."/>
            <person name="Graves T.A."/>
            <person name="Pepin K.H."/>
            <person name="Wagner-McPherson C."/>
            <person name="Layman D."/>
            <person name="Maas J."/>
            <person name="Jaeger S."/>
            <person name="Walker R."/>
            <person name="Wylie K."/>
            <person name="Sekhon M."/>
            <person name="Becker M.C."/>
            <person name="O'Laughlin M.D."/>
            <person name="Schaller M.E."/>
            <person name="Fewell G.A."/>
            <person name="Delehaunty K.D."/>
            <person name="Miner T.L."/>
            <person name="Nash W.E."/>
            <person name="Cordes M."/>
            <person name="Du H."/>
            <person name="Sun H."/>
            <person name="Edwards J."/>
            <person name="Bradshaw-Cordum H."/>
            <person name="Ali J."/>
            <person name="Andrews S."/>
            <person name="Isak A."/>
            <person name="Vanbrunt A."/>
            <person name="Nguyen C."/>
            <person name="Du F."/>
            <person name="Lamar B."/>
            <person name="Courtney L."/>
            <person name="Kalicki J."/>
            <person name="Ozersky P."/>
            <person name="Bielicki L."/>
            <person name="Scott K."/>
            <person name="Holmes A."/>
            <person name="Harkins R."/>
            <person name="Harris A."/>
            <person name="Strong C.M."/>
            <person name="Hou S."/>
            <person name="Tomlinson C."/>
            <person name="Dauphin-Kohlberg S."/>
            <person name="Kozlowicz-Reilly A."/>
            <person name="Leonard S."/>
            <person name="Rohlfing T."/>
            <person name="Rock S.M."/>
            <person name="Tin-Wollam A.-M."/>
            <person name="Abbott A."/>
            <person name="Minx P."/>
            <person name="Maupin R."/>
            <person name="Strowmatt C."/>
            <person name="Latreille P."/>
            <person name="Miller N."/>
            <person name="Johnson D."/>
            <person name="Murray J."/>
            <person name="Woessner J.P."/>
            <person name="Wendl M.C."/>
            <person name="Yang S.-P."/>
            <person name="Schultz B.R."/>
            <person name="Wallis J.W."/>
            <person name="Spieth J."/>
            <person name="Bieri T.A."/>
            <person name="Nelson J.O."/>
            <person name="Berkowicz N."/>
            <person name="Wohldmann P.E."/>
            <person name="Cook L.L."/>
            <person name="Hickenbotham M.T."/>
            <person name="Eldred J."/>
            <person name="Williams D."/>
            <person name="Bedell J.A."/>
            <person name="Mardis E.R."/>
            <person name="Clifton S.W."/>
            <person name="Chissoe S.L."/>
            <person name="Marra M.A."/>
            <person name="Raymond C."/>
            <person name="Haugen E."/>
            <person name="Gillett W."/>
            <person name="Zhou Y."/>
            <person name="James R."/>
            <person name="Phelps K."/>
            <person name="Iadanoto S."/>
            <person name="Bubb K."/>
            <person name="Simms E."/>
            <person name="Levy R."/>
            <person name="Clendenning J."/>
            <person name="Kaul R."/>
            <person name="Kent W.J."/>
            <person name="Furey T.S."/>
            <person name="Baertsch R.A."/>
            <person name="Brent M.R."/>
            <person name="Keibler E."/>
            <person name="Flicek P."/>
            <person name="Bork P."/>
            <person name="Suyama M."/>
            <person name="Bailey J.A."/>
            <person name="Portnoy M.E."/>
            <person name="Torrents D."/>
            <person name="Chinwalla A.T."/>
            <person name="Gish W.R."/>
            <person name="Eddy S.R."/>
            <person name="McPherson J.D."/>
            <person name="Olson M.V."/>
            <person name="Eichler E.E."/>
            <person name="Green E.D."/>
            <person name="Waterston R.H."/>
            <person name="Wilson R.K."/>
        </authorList>
    </citation>
    <scope>NUCLEOTIDE SEQUENCE [LARGE SCALE GENOMIC DNA]</scope>
</reference>
<reference key="3">
    <citation type="journal article" date="2004" name="Genome Res.">
        <title>The status, quality, and expansion of the NIH full-length cDNA project: the Mammalian Gene Collection (MGC).</title>
        <authorList>
            <consortium name="The MGC Project Team"/>
        </authorList>
    </citation>
    <scope>NUCLEOTIDE SEQUENCE [LARGE SCALE MRNA]</scope>
    <source>
        <tissue>Ovary</tissue>
        <tissue>Placenta</tissue>
    </source>
</reference>
<reference key="4">
    <citation type="journal article" date="2009" name="Nucleic Acids Res.">
        <title>Pentatricopeptide repeat domain protein 1 lowers the levels of mitochondrial leucine tRNAs in cells.</title>
        <authorList>
            <person name="Rackham O."/>
            <person name="Davies S.M."/>
            <person name="Shearwood A.M."/>
            <person name="Hamilton K.L."/>
            <person name="Whelan J."/>
            <person name="Filipovska A."/>
        </authorList>
    </citation>
    <scope>TISSUE SPECIFICITY</scope>
    <scope>SUBUNIT</scope>
    <scope>SUBCELLULAR LOCATION</scope>
</reference>
<reference key="5">
    <citation type="journal article" date="2011" name="Cell Cycle">
        <title>RNA processing in human mitochondria.</title>
        <authorList>
            <person name="Sanchez M.I."/>
            <person name="Mercer T.R."/>
            <person name="Davies S.M."/>
            <person name="Shearwood A.M."/>
            <person name="Nygard K.K."/>
            <person name="Richman T.R."/>
            <person name="Mattick J.S."/>
            <person name="Rackham O."/>
            <person name="Filipovska A."/>
        </authorList>
    </citation>
    <scope>SUBCELLULAR LOCATION</scope>
    <scope>SUBUNIT</scope>
    <scope>INTERACTION WITH ELAC2</scope>
    <scope>FUNCTION</scope>
</reference>
<sequence>MDFVRLARLFARARPMGLFILQHLDPCRARWAGGREGLMRPMWAPFSSSSSQLPLGQERQENTGSLGSDPSHSNSTATQEEDEEEEESFGTLSDKYSSRRLFRKSAAQFHNLRFGERRDEQMEPEPKLWRGRRNTPYWYFLQCKHLIKEGKLVEALDLFERQMLKEERLQPMESNYTVLIGGCGRVGYLKKAFNLYNQMKKRDLEPSDATYTALFNVCAESPWKDSALQSALKLRQQLQAKNFELNLKTYHALLKMAAKCADLRMCLDVFKEIIHKGHVVTEETFSFLLMGCIQDKKTGFRYALQVWRLMLSLGLQPSRDSYNLLLVAARDCGLGDPQVASELLLKPREEATVLQPPVSRQRPRRTAQAKAGNLMSAMLHVEALERQLFLEPSQALGPPEPPEARVPGKAQPEVDTKAEPSHTAALTAVALKPPPVELEVNLLTPGAVPPTVVSFGTVTTPADRLALIGGLEGFLSKMAEHRQQPDIRTLTLLAEVVESGSPAESLLLALLDEHQVEADLTFFNTLVRKKSKLGDLEGAKALLPVLAKRGLVPNLQTFCNLAIGCHRPKDGLQLLTDMKKSQVTPNTHIYSALINAAIRKLNYTYLISILKDMKQNRVPVNEVVIRQLEFAAQYPPTFDRYQGKNTYLEKIDGFRAYYKQWLTVMPAEETPHPWQKFRTKPQGDQDTGKEADDGCALGGR</sequence>
<accession>O75127</accession>
<accession>Q3ZB78</accession>
<accession>Q66K60</accession>
<accession>Q9UDV2</accession>
<evidence type="ECO:0000250" key="1"/>
<evidence type="ECO:0000256" key="2">
    <source>
        <dbReference type="SAM" id="MobiDB-lite"/>
    </source>
</evidence>
<evidence type="ECO:0000269" key="3">
    <source>
    </source>
</evidence>
<evidence type="ECO:0000269" key="4">
    <source>
    </source>
</evidence>
<evidence type="ECO:0000305" key="5"/>
<protein>
    <recommendedName>
        <fullName>Pentatricopeptide repeat-containing protein 1, mitochondrial</fullName>
    </recommendedName>
</protein>
<organism>
    <name type="scientific">Homo sapiens</name>
    <name type="common">Human</name>
    <dbReference type="NCBI Taxonomy" id="9606"/>
    <lineage>
        <taxon>Eukaryota</taxon>
        <taxon>Metazoa</taxon>
        <taxon>Chordata</taxon>
        <taxon>Craniata</taxon>
        <taxon>Vertebrata</taxon>
        <taxon>Euteleostomi</taxon>
        <taxon>Mammalia</taxon>
        <taxon>Eutheria</taxon>
        <taxon>Euarchontoglires</taxon>
        <taxon>Primates</taxon>
        <taxon>Haplorrhini</taxon>
        <taxon>Catarrhini</taxon>
        <taxon>Hominidae</taxon>
        <taxon>Homo</taxon>
    </lineage>
</organism>
<proteinExistence type="evidence at protein level"/>
<gene>
    <name type="primary">PTCD1</name>
    <name type="synonym">KIAA0632</name>
</gene>
<feature type="chain" id="PRO_0000097089" description="Pentatricopeptide repeat-containing protein 1, mitochondrial">
    <location>
        <begin position="1"/>
        <end position="700"/>
    </location>
</feature>
<feature type="repeat" description="PPR 1">
    <location>
        <begin position="135"/>
        <end position="171"/>
    </location>
</feature>
<feature type="repeat" description="PPR 2">
    <location>
        <begin position="172"/>
        <end position="206"/>
    </location>
</feature>
<feature type="repeat" description="PPR 3">
    <location>
        <begin position="207"/>
        <end position="245"/>
    </location>
</feature>
<feature type="repeat" description="PPR 4">
    <location>
        <begin position="246"/>
        <end position="280"/>
    </location>
</feature>
<feature type="repeat" description="PPR 5">
    <location>
        <begin position="281"/>
        <end position="317"/>
    </location>
</feature>
<feature type="repeat" description="PPR 6">
    <location>
        <begin position="318"/>
        <end position="354"/>
    </location>
</feature>
<feature type="repeat" description="PPR 7">
    <location>
        <begin position="519"/>
        <end position="553"/>
    </location>
</feature>
<feature type="repeat" description="PPR 8">
    <location>
        <begin position="554"/>
        <end position="585"/>
    </location>
</feature>
<feature type="repeat" description="PPR 9">
    <location>
        <begin position="586"/>
        <end position="620"/>
    </location>
</feature>
<feature type="region of interest" description="Disordered" evidence="2">
    <location>
        <begin position="49"/>
        <end position="93"/>
    </location>
</feature>
<feature type="region of interest" description="Disordered" evidence="2">
    <location>
        <begin position="393"/>
        <end position="414"/>
    </location>
</feature>
<feature type="region of interest" description="Disordered" evidence="2">
    <location>
        <begin position="672"/>
        <end position="700"/>
    </location>
</feature>
<feature type="compositionally biased region" description="Polar residues" evidence="2">
    <location>
        <begin position="62"/>
        <end position="78"/>
    </location>
</feature>
<feature type="compositionally biased region" description="Acidic residues" evidence="2">
    <location>
        <begin position="79"/>
        <end position="88"/>
    </location>
</feature>
<feature type="compositionally biased region" description="Basic and acidic residues" evidence="2">
    <location>
        <begin position="681"/>
        <end position="692"/>
    </location>
</feature>
<feature type="sequence variant" id="VAR_052936" description="In dbSNP:rs34714513.">
    <original>P</original>
    <variation>L</variation>
    <location>
        <position position="356"/>
    </location>
</feature>
<feature type="sequence variant" id="VAR_052937" description="In dbSNP:rs35633728.">
    <original>V</original>
    <variation>G</variation>
    <location>
        <position position="620"/>
    </location>
</feature>
<feature type="sequence conflict" description="In Ref. 2; AAH80580." evidence="5" ref="2">
    <original>S</original>
    <variation>F</variation>
    <location>
        <position position="505"/>
    </location>
</feature>